<comment type="function">
    <text evidence="1">Functions in the biosynthesis of branched-chain amino acids. Catalyzes the dehydration of (2R,3R)-2,3-dihydroxy-3-methylpentanoate (2,3-dihydroxy-3-methylvalerate) into 2-oxo-3-methylpentanoate (2-oxo-3-methylvalerate) and of (2R)-2,3-dihydroxy-3-methylbutanoate (2,3-dihydroxyisovalerate) into 2-oxo-3-methylbutanoate (2-oxoisovalerate), the penultimate precursor to L-isoleucine and L-valine, respectively.</text>
</comment>
<comment type="catalytic activity">
    <reaction evidence="1">
        <text>(2R)-2,3-dihydroxy-3-methylbutanoate = 3-methyl-2-oxobutanoate + H2O</text>
        <dbReference type="Rhea" id="RHEA:24809"/>
        <dbReference type="ChEBI" id="CHEBI:11851"/>
        <dbReference type="ChEBI" id="CHEBI:15377"/>
        <dbReference type="ChEBI" id="CHEBI:49072"/>
        <dbReference type="EC" id="4.2.1.9"/>
    </reaction>
    <physiologicalReaction direction="left-to-right" evidence="1">
        <dbReference type="Rhea" id="RHEA:24810"/>
    </physiologicalReaction>
</comment>
<comment type="catalytic activity">
    <reaction evidence="1">
        <text>(2R,3R)-2,3-dihydroxy-3-methylpentanoate = (S)-3-methyl-2-oxopentanoate + H2O</text>
        <dbReference type="Rhea" id="RHEA:27694"/>
        <dbReference type="ChEBI" id="CHEBI:15377"/>
        <dbReference type="ChEBI" id="CHEBI:35146"/>
        <dbReference type="ChEBI" id="CHEBI:49258"/>
        <dbReference type="EC" id="4.2.1.9"/>
    </reaction>
    <physiologicalReaction direction="left-to-right" evidence="1">
        <dbReference type="Rhea" id="RHEA:27695"/>
    </physiologicalReaction>
</comment>
<comment type="cofactor">
    <cofactor evidence="1">
        <name>[2Fe-2S] cluster</name>
        <dbReference type="ChEBI" id="CHEBI:190135"/>
    </cofactor>
    <text evidence="1">Binds 1 [2Fe-2S] cluster per subunit. This cluster acts as a Lewis acid cofactor.</text>
</comment>
<comment type="cofactor">
    <cofactor evidence="1">
        <name>Mg(2+)</name>
        <dbReference type="ChEBI" id="CHEBI:18420"/>
    </cofactor>
</comment>
<comment type="pathway">
    <text evidence="1">Amino-acid biosynthesis; L-isoleucine biosynthesis; L-isoleucine from 2-oxobutanoate: step 3/4.</text>
</comment>
<comment type="pathway">
    <text evidence="1">Amino-acid biosynthesis; L-valine biosynthesis; L-valine from pyruvate: step 3/4.</text>
</comment>
<comment type="subunit">
    <text evidence="1">Homodimer.</text>
</comment>
<comment type="similarity">
    <text evidence="1">Belongs to the IlvD/Edd family.</text>
</comment>
<protein>
    <recommendedName>
        <fullName evidence="1">Dihydroxy-acid dehydratase</fullName>
        <shortName evidence="1">DAD</shortName>
        <ecNumber evidence="1">4.2.1.9</ecNumber>
    </recommendedName>
</protein>
<reference key="1">
    <citation type="journal article" date="2009" name="Proc. Natl. Acad. Sci. U.S.A.">
        <title>Biogeography of the Sulfolobus islandicus pan-genome.</title>
        <authorList>
            <person name="Reno M.L."/>
            <person name="Held N.L."/>
            <person name="Fields C.J."/>
            <person name="Burke P.V."/>
            <person name="Whitaker R.J."/>
        </authorList>
    </citation>
    <scope>NUCLEOTIDE SEQUENCE [LARGE SCALE GENOMIC DNA]</scope>
    <source>
        <strain>M.16.27</strain>
    </source>
</reference>
<name>ILVD_SACI3</name>
<sequence length="558" mass="59505">MPAKLNSPSRYHGIYNAPHRAFLRSVGLTDEEIGKPLVAIATAWSEAGPCNFHTLALARVAKEGTKEAGLSPLAFPTMVVNDNIGMGSEGMRYSLVSRDLIADMVEAQFNAHAFDGLVGIGGCDKTTPGILMAMARLNVPSIYIYGGSAEPGYFMGKRLTIEDVHEAIGAYLAKRITENELYEIEKRAHPTLGTCSGLFTANTMGSMSEALGMALPGSASPTATSSRRVMYVRETGKALGSLIENGIKSRDILTFEAFENAITTLMAMGGSTNAVLHLLAIAYEAGVKLTLDDFNRISKRTPYIASMKPGGDYVMADLDEVGGVPVVLKKLLDAGLLHGDVLTVTGKTMKQNLEQYKYPNVPHSHIVRDVKNPIKPRGGIVILKGSLAPEGAVIKVAATNVVKFEGKAKVYNSEDDAFKGVQSGEVREGEVVIIRYEGPKGAPGMPEMLRVTAAIMGAGLNNVALVTDGRFSGATRGPMVGHVAPEAMVGGPIAIVEDGDTIVIDVESERLDLKLSEEEIKNRLKRWSPPSPRYKSGLLAKYASLVSQASMGAVTRPA</sequence>
<gene>
    <name evidence="1" type="primary">ilvD</name>
    <name type="ordered locus">M1627_2336</name>
</gene>
<evidence type="ECO:0000255" key="1">
    <source>
        <dbReference type="HAMAP-Rule" id="MF_00012"/>
    </source>
</evidence>
<keyword id="KW-0001">2Fe-2S</keyword>
<keyword id="KW-0028">Amino-acid biosynthesis</keyword>
<keyword id="KW-0100">Branched-chain amino acid biosynthesis</keyword>
<keyword id="KW-0408">Iron</keyword>
<keyword id="KW-0411">Iron-sulfur</keyword>
<keyword id="KW-0456">Lyase</keyword>
<keyword id="KW-0460">Magnesium</keyword>
<keyword id="KW-0479">Metal-binding</keyword>
<organism>
    <name type="scientific">Saccharolobus islandicus (strain M.16.27)</name>
    <name type="common">Sulfolobus islandicus</name>
    <dbReference type="NCBI Taxonomy" id="427318"/>
    <lineage>
        <taxon>Archaea</taxon>
        <taxon>Thermoproteota</taxon>
        <taxon>Thermoprotei</taxon>
        <taxon>Sulfolobales</taxon>
        <taxon>Sulfolobaceae</taxon>
        <taxon>Saccharolobus</taxon>
    </lineage>
</organism>
<dbReference type="EC" id="4.2.1.9" evidence="1"/>
<dbReference type="EMBL" id="CP001401">
    <property type="protein sequence ID" value="ACP56195.1"/>
    <property type="molecule type" value="Genomic_DNA"/>
</dbReference>
<dbReference type="RefSeq" id="WP_012712214.1">
    <property type="nucleotide sequence ID" value="NC_012632.1"/>
</dbReference>
<dbReference type="SMR" id="C3N1G8"/>
<dbReference type="GeneID" id="84062538"/>
<dbReference type="KEGG" id="sim:M1627_2336"/>
<dbReference type="HOGENOM" id="CLU_014271_4_2_2"/>
<dbReference type="UniPathway" id="UPA00047">
    <property type="reaction ID" value="UER00057"/>
</dbReference>
<dbReference type="UniPathway" id="UPA00049">
    <property type="reaction ID" value="UER00061"/>
</dbReference>
<dbReference type="Proteomes" id="UP000002307">
    <property type="component" value="Chromosome"/>
</dbReference>
<dbReference type="GO" id="GO:0051537">
    <property type="term" value="F:2 iron, 2 sulfur cluster binding"/>
    <property type="evidence" value="ECO:0007669"/>
    <property type="project" value="UniProtKB-UniRule"/>
</dbReference>
<dbReference type="GO" id="GO:0004160">
    <property type="term" value="F:dihydroxy-acid dehydratase activity"/>
    <property type="evidence" value="ECO:0007669"/>
    <property type="project" value="UniProtKB-UniRule"/>
</dbReference>
<dbReference type="GO" id="GO:0000287">
    <property type="term" value="F:magnesium ion binding"/>
    <property type="evidence" value="ECO:0007669"/>
    <property type="project" value="UniProtKB-UniRule"/>
</dbReference>
<dbReference type="GO" id="GO:0009097">
    <property type="term" value="P:isoleucine biosynthetic process"/>
    <property type="evidence" value="ECO:0007669"/>
    <property type="project" value="UniProtKB-UniRule"/>
</dbReference>
<dbReference type="GO" id="GO:0009099">
    <property type="term" value="P:L-valine biosynthetic process"/>
    <property type="evidence" value="ECO:0007669"/>
    <property type="project" value="UniProtKB-UniRule"/>
</dbReference>
<dbReference type="FunFam" id="3.50.30.80:FF:000001">
    <property type="entry name" value="Dihydroxy-acid dehydratase"/>
    <property type="match status" value="1"/>
</dbReference>
<dbReference type="Gene3D" id="3.50.30.80">
    <property type="entry name" value="IlvD/EDD C-terminal domain-like"/>
    <property type="match status" value="1"/>
</dbReference>
<dbReference type="HAMAP" id="MF_00012">
    <property type="entry name" value="IlvD"/>
    <property type="match status" value="1"/>
</dbReference>
<dbReference type="InterPro" id="IPR050165">
    <property type="entry name" value="DHAD_IlvD/Edd"/>
</dbReference>
<dbReference type="InterPro" id="IPR042096">
    <property type="entry name" value="Dihydro-acid_dehy_C"/>
</dbReference>
<dbReference type="InterPro" id="IPR004404">
    <property type="entry name" value="DihydroxyA_deHydtase"/>
</dbReference>
<dbReference type="InterPro" id="IPR020558">
    <property type="entry name" value="DiOHA_6PGluconate_deHydtase_CS"/>
</dbReference>
<dbReference type="InterPro" id="IPR056740">
    <property type="entry name" value="ILV_EDD_C"/>
</dbReference>
<dbReference type="InterPro" id="IPR000581">
    <property type="entry name" value="ILV_EDD_N"/>
</dbReference>
<dbReference type="InterPro" id="IPR037237">
    <property type="entry name" value="IlvD/EDD_N"/>
</dbReference>
<dbReference type="NCBIfam" id="TIGR00110">
    <property type="entry name" value="ilvD"/>
    <property type="match status" value="1"/>
</dbReference>
<dbReference type="NCBIfam" id="NF002068">
    <property type="entry name" value="PRK00911.1"/>
    <property type="match status" value="1"/>
</dbReference>
<dbReference type="PANTHER" id="PTHR21000">
    <property type="entry name" value="DIHYDROXY-ACID DEHYDRATASE DAD"/>
    <property type="match status" value="1"/>
</dbReference>
<dbReference type="PANTHER" id="PTHR21000:SF5">
    <property type="entry name" value="DIHYDROXY-ACID DEHYDRATASE, MITOCHONDRIAL"/>
    <property type="match status" value="1"/>
</dbReference>
<dbReference type="Pfam" id="PF24877">
    <property type="entry name" value="ILV_EDD_C"/>
    <property type="match status" value="1"/>
</dbReference>
<dbReference type="Pfam" id="PF00920">
    <property type="entry name" value="ILVD_EDD_N"/>
    <property type="match status" value="1"/>
</dbReference>
<dbReference type="SUPFAM" id="SSF143975">
    <property type="entry name" value="IlvD/EDD N-terminal domain-like"/>
    <property type="match status" value="1"/>
</dbReference>
<dbReference type="SUPFAM" id="SSF52016">
    <property type="entry name" value="LeuD/IlvD-like"/>
    <property type="match status" value="1"/>
</dbReference>
<dbReference type="PROSITE" id="PS00886">
    <property type="entry name" value="ILVD_EDD_1"/>
    <property type="match status" value="1"/>
</dbReference>
<dbReference type="PROSITE" id="PS00887">
    <property type="entry name" value="ILVD_EDD_2"/>
    <property type="match status" value="1"/>
</dbReference>
<feature type="chain" id="PRO_1000201783" description="Dihydroxy-acid dehydratase">
    <location>
        <begin position="1"/>
        <end position="558"/>
    </location>
</feature>
<feature type="active site" description="Proton acceptor" evidence="1">
    <location>
        <position position="472"/>
    </location>
</feature>
<feature type="binding site" evidence="1">
    <location>
        <position position="50"/>
    </location>
    <ligand>
        <name>[2Fe-2S] cluster</name>
        <dbReference type="ChEBI" id="CHEBI:190135"/>
    </ligand>
</feature>
<feature type="binding site" evidence="1">
    <location>
        <position position="82"/>
    </location>
    <ligand>
        <name>Mg(2+)</name>
        <dbReference type="ChEBI" id="CHEBI:18420"/>
    </ligand>
</feature>
<feature type="binding site" evidence="1">
    <location>
        <position position="123"/>
    </location>
    <ligand>
        <name>[2Fe-2S] cluster</name>
        <dbReference type="ChEBI" id="CHEBI:190135"/>
    </ligand>
</feature>
<feature type="binding site" evidence="1">
    <location>
        <position position="124"/>
    </location>
    <ligand>
        <name>Mg(2+)</name>
        <dbReference type="ChEBI" id="CHEBI:18420"/>
    </ligand>
</feature>
<feature type="binding site" description="via carbamate group" evidence="1">
    <location>
        <position position="125"/>
    </location>
    <ligand>
        <name>Mg(2+)</name>
        <dbReference type="ChEBI" id="CHEBI:18420"/>
    </ligand>
</feature>
<feature type="binding site" evidence="1">
    <location>
        <position position="195"/>
    </location>
    <ligand>
        <name>[2Fe-2S] cluster</name>
        <dbReference type="ChEBI" id="CHEBI:190135"/>
    </ligand>
</feature>
<feature type="binding site" evidence="1">
    <location>
        <position position="447"/>
    </location>
    <ligand>
        <name>Mg(2+)</name>
        <dbReference type="ChEBI" id="CHEBI:18420"/>
    </ligand>
</feature>
<feature type="modified residue" description="N6-carboxylysine" evidence="1">
    <location>
        <position position="125"/>
    </location>
</feature>
<proteinExistence type="inferred from homology"/>
<accession>C3N1G8</accession>